<gene>
    <name evidence="1" type="primary">panC</name>
    <name type="ordered locus">RHA1_ro04415</name>
</gene>
<dbReference type="EC" id="6.3.2.1" evidence="1"/>
<dbReference type="EMBL" id="CP000431">
    <property type="protein sequence ID" value="ABG96201.1"/>
    <property type="molecule type" value="Genomic_DNA"/>
</dbReference>
<dbReference type="RefSeq" id="WP_011596826.1">
    <property type="nucleotide sequence ID" value="NC_008268.1"/>
</dbReference>
<dbReference type="SMR" id="Q0S8D5"/>
<dbReference type="KEGG" id="rha:RHA1_ro04415"/>
<dbReference type="PATRIC" id="fig|101510.16.peg.4444"/>
<dbReference type="eggNOG" id="COG0414">
    <property type="taxonomic scope" value="Bacteria"/>
</dbReference>
<dbReference type="HOGENOM" id="CLU_047148_0_2_11"/>
<dbReference type="OrthoDB" id="9773087at2"/>
<dbReference type="UniPathway" id="UPA00028">
    <property type="reaction ID" value="UER00005"/>
</dbReference>
<dbReference type="Proteomes" id="UP000008710">
    <property type="component" value="Chromosome"/>
</dbReference>
<dbReference type="GO" id="GO:0005829">
    <property type="term" value="C:cytosol"/>
    <property type="evidence" value="ECO:0007669"/>
    <property type="project" value="TreeGrafter"/>
</dbReference>
<dbReference type="GO" id="GO:0005524">
    <property type="term" value="F:ATP binding"/>
    <property type="evidence" value="ECO:0007669"/>
    <property type="project" value="UniProtKB-KW"/>
</dbReference>
<dbReference type="GO" id="GO:0004592">
    <property type="term" value="F:pantoate-beta-alanine ligase activity"/>
    <property type="evidence" value="ECO:0007669"/>
    <property type="project" value="UniProtKB-UniRule"/>
</dbReference>
<dbReference type="GO" id="GO:0015940">
    <property type="term" value="P:pantothenate biosynthetic process"/>
    <property type="evidence" value="ECO:0007669"/>
    <property type="project" value="UniProtKB-UniRule"/>
</dbReference>
<dbReference type="CDD" id="cd00560">
    <property type="entry name" value="PanC"/>
    <property type="match status" value="1"/>
</dbReference>
<dbReference type="FunFam" id="3.40.50.620:FF:000114">
    <property type="entry name" value="Pantothenate synthetase"/>
    <property type="match status" value="1"/>
</dbReference>
<dbReference type="Gene3D" id="3.40.50.620">
    <property type="entry name" value="HUPs"/>
    <property type="match status" value="1"/>
</dbReference>
<dbReference type="Gene3D" id="3.30.1300.10">
    <property type="entry name" value="Pantoate-beta-alanine ligase, C-terminal domain"/>
    <property type="match status" value="1"/>
</dbReference>
<dbReference type="HAMAP" id="MF_00158">
    <property type="entry name" value="PanC"/>
    <property type="match status" value="1"/>
</dbReference>
<dbReference type="InterPro" id="IPR003721">
    <property type="entry name" value="Pantoate_ligase"/>
</dbReference>
<dbReference type="InterPro" id="IPR042176">
    <property type="entry name" value="Pantoate_ligase_C"/>
</dbReference>
<dbReference type="InterPro" id="IPR014729">
    <property type="entry name" value="Rossmann-like_a/b/a_fold"/>
</dbReference>
<dbReference type="NCBIfam" id="TIGR00018">
    <property type="entry name" value="panC"/>
    <property type="match status" value="1"/>
</dbReference>
<dbReference type="PANTHER" id="PTHR21299">
    <property type="entry name" value="CYTIDYLATE KINASE/PANTOATE-BETA-ALANINE LIGASE"/>
    <property type="match status" value="1"/>
</dbReference>
<dbReference type="PANTHER" id="PTHR21299:SF1">
    <property type="entry name" value="PANTOATE--BETA-ALANINE LIGASE"/>
    <property type="match status" value="1"/>
</dbReference>
<dbReference type="Pfam" id="PF02569">
    <property type="entry name" value="Pantoate_ligase"/>
    <property type="match status" value="1"/>
</dbReference>
<dbReference type="SUPFAM" id="SSF52374">
    <property type="entry name" value="Nucleotidylyl transferase"/>
    <property type="match status" value="1"/>
</dbReference>
<sequence length="312" mass="32922">MSDLQGGYKRGELTVHHDPSVLTRVSKALRGVGRQVALVPTMGALHTGHLELVRQAKLTGAVVIVSIFVNPLQFGAGEDLDAYPRTLDADLELLREAGVELAFVPTAATMYPAGPRTTIHPGPLGAELEGVSRPTHFAGMLTVVAKLLQIAAPNVAYFGEKDYQQLTLIRQMVTDLNFDVRIFGVPTVREHDGLALSSRNRYLDEAQRSAATALSAALIAGAHAAAGGAEAILATAREVLASVPEVEVDYLEVRGVDLGPAPERGDGRLLVAAKVGTTRLIDNVGVAVGTGFLERDAEPPSDASAADELLSR</sequence>
<keyword id="KW-0067">ATP-binding</keyword>
<keyword id="KW-0963">Cytoplasm</keyword>
<keyword id="KW-0436">Ligase</keyword>
<keyword id="KW-0547">Nucleotide-binding</keyword>
<keyword id="KW-0566">Pantothenate biosynthesis</keyword>
<accession>Q0S8D5</accession>
<reference key="1">
    <citation type="journal article" date="2006" name="Proc. Natl. Acad. Sci. U.S.A.">
        <title>The complete genome of Rhodococcus sp. RHA1 provides insights into a catabolic powerhouse.</title>
        <authorList>
            <person name="McLeod M.P."/>
            <person name="Warren R.L."/>
            <person name="Hsiao W.W.L."/>
            <person name="Araki N."/>
            <person name="Myhre M."/>
            <person name="Fernandes C."/>
            <person name="Miyazawa D."/>
            <person name="Wong W."/>
            <person name="Lillquist A.L."/>
            <person name="Wang D."/>
            <person name="Dosanjh M."/>
            <person name="Hara H."/>
            <person name="Petrescu A."/>
            <person name="Morin R.D."/>
            <person name="Yang G."/>
            <person name="Stott J.M."/>
            <person name="Schein J.E."/>
            <person name="Shin H."/>
            <person name="Smailus D."/>
            <person name="Siddiqui A.S."/>
            <person name="Marra M.A."/>
            <person name="Jones S.J.M."/>
            <person name="Holt R."/>
            <person name="Brinkman F.S.L."/>
            <person name="Miyauchi K."/>
            <person name="Fukuda M."/>
            <person name="Davies J.E."/>
            <person name="Mohn W.W."/>
            <person name="Eltis L.D."/>
        </authorList>
    </citation>
    <scope>NUCLEOTIDE SEQUENCE [LARGE SCALE GENOMIC DNA]</scope>
    <source>
        <strain>RHA1</strain>
    </source>
</reference>
<comment type="function">
    <text evidence="1">Catalyzes the condensation of pantoate with beta-alanine in an ATP-dependent reaction via a pantoyl-adenylate intermediate.</text>
</comment>
<comment type="catalytic activity">
    <reaction evidence="1">
        <text>(R)-pantoate + beta-alanine + ATP = (R)-pantothenate + AMP + diphosphate + H(+)</text>
        <dbReference type="Rhea" id="RHEA:10912"/>
        <dbReference type="ChEBI" id="CHEBI:15378"/>
        <dbReference type="ChEBI" id="CHEBI:15980"/>
        <dbReference type="ChEBI" id="CHEBI:29032"/>
        <dbReference type="ChEBI" id="CHEBI:30616"/>
        <dbReference type="ChEBI" id="CHEBI:33019"/>
        <dbReference type="ChEBI" id="CHEBI:57966"/>
        <dbReference type="ChEBI" id="CHEBI:456215"/>
        <dbReference type="EC" id="6.3.2.1"/>
    </reaction>
</comment>
<comment type="pathway">
    <text evidence="1">Cofactor biosynthesis; (R)-pantothenate biosynthesis; (R)-pantothenate from (R)-pantoate and beta-alanine: step 1/1.</text>
</comment>
<comment type="subunit">
    <text evidence="1">Homodimer.</text>
</comment>
<comment type="subcellular location">
    <subcellularLocation>
        <location evidence="1">Cytoplasm</location>
    </subcellularLocation>
</comment>
<comment type="miscellaneous">
    <text evidence="1">The reaction proceeds by a bi uni uni bi ping pong mechanism.</text>
</comment>
<comment type="similarity">
    <text evidence="1">Belongs to the pantothenate synthetase family.</text>
</comment>
<feature type="chain" id="PRO_0000305529" description="Pantothenate synthetase">
    <location>
        <begin position="1"/>
        <end position="312"/>
    </location>
</feature>
<feature type="active site" description="Proton donor" evidence="1">
    <location>
        <position position="49"/>
    </location>
</feature>
<feature type="binding site" evidence="1">
    <location>
        <begin position="42"/>
        <end position="49"/>
    </location>
    <ligand>
        <name>ATP</name>
        <dbReference type="ChEBI" id="CHEBI:30616"/>
    </ligand>
</feature>
<feature type="binding site" evidence="1">
    <location>
        <position position="73"/>
    </location>
    <ligand>
        <name>(R)-pantoate</name>
        <dbReference type="ChEBI" id="CHEBI:15980"/>
    </ligand>
</feature>
<feature type="binding site" evidence="1">
    <location>
        <position position="73"/>
    </location>
    <ligand>
        <name>beta-alanine</name>
        <dbReference type="ChEBI" id="CHEBI:57966"/>
    </ligand>
</feature>
<feature type="binding site" evidence="1">
    <location>
        <begin position="159"/>
        <end position="162"/>
    </location>
    <ligand>
        <name>ATP</name>
        <dbReference type="ChEBI" id="CHEBI:30616"/>
    </ligand>
</feature>
<feature type="binding site" evidence="1">
    <location>
        <position position="165"/>
    </location>
    <ligand>
        <name>(R)-pantoate</name>
        <dbReference type="ChEBI" id="CHEBI:15980"/>
    </ligand>
</feature>
<feature type="binding site" evidence="1">
    <location>
        <position position="188"/>
    </location>
    <ligand>
        <name>ATP</name>
        <dbReference type="ChEBI" id="CHEBI:30616"/>
    </ligand>
</feature>
<feature type="binding site" evidence="1">
    <location>
        <begin position="196"/>
        <end position="199"/>
    </location>
    <ligand>
        <name>ATP</name>
        <dbReference type="ChEBI" id="CHEBI:30616"/>
    </ligand>
</feature>
<evidence type="ECO:0000255" key="1">
    <source>
        <dbReference type="HAMAP-Rule" id="MF_00158"/>
    </source>
</evidence>
<organism>
    <name type="scientific">Rhodococcus jostii (strain RHA1)</name>
    <dbReference type="NCBI Taxonomy" id="101510"/>
    <lineage>
        <taxon>Bacteria</taxon>
        <taxon>Bacillati</taxon>
        <taxon>Actinomycetota</taxon>
        <taxon>Actinomycetes</taxon>
        <taxon>Mycobacteriales</taxon>
        <taxon>Nocardiaceae</taxon>
        <taxon>Rhodococcus</taxon>
    </lineage>
</organism>
<name>PANC_RHOJR</name>
<protein>
    <recommendedName>
        <fullName evidence="1">Pantothenate synthetase</fullName>
        <shortName evidence="1">PS</shortName>
        <ecNumber evidence="1">6.3.2.1</ecNumber>
    </recommendedName>
    <alternativeName>
        <fullName evidence="1">Pantoate--beta-alanine ligase</fullName>
    </alternativeName>
    <alternativeName>
        <fullName evidence="1">Pantoate-activating enzyme</fullName>
    </alternativeName>
</protein>
<proteinExistence type="inferred from homology"/>